<comment type="function">
    <text evidence="1">Binds to the 23S rRNA.</text>
</comment>
<comment type="subunit">
    <text evidence="1">Part of the 50S ribosomal subunit.</text>
</comment>
<comment type="similarity">
    <text evidence="1">Belongs to the universal ribosomal protein uL15 family.</text>
</comment>
<proteinExistence type="inferred from homology"/>
<protein>
    <recommendedName>
        <fullName evidence="1">Large ribosomal subunit protein uL15</fullName>
    </recommendedName>
    <alternativeName>
        <fullName evidence="3">50S ribosomal protein L15</fullName>
    </alternativeName>
</protein>
<dbReference type="EMBL" id="BX897699">
    <property type="protein sequence ID" value="CAF27823.1"/>
    <property type="molecule type" value="Genomic_DNA"/>
</dbReference>
<dbReference type="RefSeq" id="WP_011180895.1">
    <property type="nucleotide sequence ID" value="NZ_LRIJ02000001.1"/>
</dbReference>
<dbReference type="SMR" id="Q6G2Y4"/>
<dbReference type="PaxDb" id="283166-BH10320"/>
<dbReference type="EnsemblBacteria" id="CAF27823">
    <property type="protein sequence ID" value="CAF27823"/>
    <property type="gene ID" value="BH10320"/>
</dbReference>
<dbReference type="GeneID" id="92985282"/>
<dbReference type="KEGG" id="bhe:BH10320"/>
<dbReference type="eggNOG" id="COG0200">
    <property type="taxonomic scope" value="Bacteria"/>
</dbReference>
<dbReference type="OrthoDB" id="9810293at2"/>
<dbReference type="Proteomes" id="UP000000421">
    <property type="component" value="Chromosome"/>
</dbReference>
<dbReference type="GO" id="GO:0022625">
    <property type="term" value="C:cytosolic large ribosomal subunit"/>
    <property type="evidence" value="ECO:0007669"/>
    <property type="project" value="TreeGrafter"/>
</dbReference>
<dbReference type="GO" id="GO:0019843">
    <property type="term" value="F:rRNA binding"/>
    <property type="evidence" value="ECO:0007669"/>
    <property type="project" value="UniProtKB-UniRule"/>
</dbReference>
<dbReference type="GO" id="GO:0003735">
    <property type="term" value="F:structural constituent of ribosome"/>
    <property type="evidence" value="ECO:0007669"/>
    <property type="project" value="InterPro"/>
</dbReference>
<dbReference type="GO" id="GO:0006412">
    <property type="term" value="P:translation"/>
    <property type="evidence" value="ECO:0007669"/>
    <property type="project" value="UniProtKB-UniRule"/>
</dbReference>
<dbReference type="Gene3D" id="3.100.10.10">
    <property type="match status" value="1"/>
</dbReference>
<dbReference type="HAMAP" id="MF_01341">
    <property type="entry name" value="Ribosomal_uL15"/>
    <property type="match status" value="1"/>
</dbReference>
<dbReference type="InterPro" id="IPR030878">
    <property type="entry name" value="Ribosomal_uL15"/>
</dbReference>
<dbReference type="InterPro" id="IPR021131">
    <property type="entry name" value="Ribosomal_uL15/eL18"/>
</dbReference>
<dbReference type="InterPro" id="IPR036227">
    <property type="entry name" value="Ribosomal_uL15/eL18_sf"/>
</dbReference>
<dbReference type="InterPro" id="IPR005749">
    <property type="entry name" value="Ribosomal_uL15_bac-type"/>
</dbReference>
<dbReference type="InterPro" id="IPR001196">
    <property type="entry name" value="Ribosomal_uL15_CS"/>
</dbReference>
<dbReference type="NCBIfam" id="TIGR01071">
    <property type="entry name" value="rplO_bact"/>
    <property type="match status" value="1"/>
</dbReference>
<dbReference type="PANTHER" id="PTHR12934">
    <property type="entry name" value="50S RIBOSOMAL PROTEIN L15"/>
    <property type="match status" value="1"/>
</dbReference>
<dbReference type="PANTHER" id="PTHR12934:SF11">
    <property type="entry name" value="LARGE RIBOSOMAL SUBUNIT PROTEIN UL15M"/>
    <property type="match status" value="1"/>
</dbReference>
<dbReference type="Pfam" id="PF00828">
    <property type="entry name" value="Ribosomal_L27A"/>
    <property type="match status" value="1"/>
</dbReference>
<dbReference type="SUPFAM" id="SSF52080">
    <property type="entry name" value="Ribosomal proteins L15p and L18e"/>
    <property type="match status" value="1"/>
</dbReference>
<dbReference type="PROSITE" id="PS00475">
    <property type="entry name" value="RIBOSOMAL_L15"/>
    <property type="match status" value="1"/>
</dbReference>
<evidence type="ECO:0000255" key="1">
    <source>
        <dbReference type="HAMAP-Rule" id="MF_01341"/>
    </source>
</evidence>
<evidence type="ECO:0000256" key="2">
    <source>
        <dbReference type="SAM" id="MobiDB-lite"/>
    </source>
</evidence>
<evidence type="ECO:0000305" key="3"/>
<reference key="1">
    <citation type="journal article" date="2004" name="Proc. Natl. Acad. Sci. U.S.A.">
        <title>The louse-borne human pathogen Bartonella quintana is a genomic derivative of the zoonotic agent Bartonella henselae.</title>
        <authorList>
            <person name="Alsmark U.C.M."/>
            <person name="Frank A.C."/>
            <person name="Karlberg E.O."/>
            <person name="Legault B.-A."/>
            <person name="Ardell D.H."/>
            <person name="Canbaeck B."/>
            <person name="Eriksson A.-S."/>
            <person name="Naeslund A.K."/>
            <person name="Handley S.A."/>
            <person name="Huvet M."/>
            <person name="La Scola B."/>
            <person name="Holmberg M."/>
            <person name="Andersson S.G.E."/>
        </authorList>
    </citation>
    <scope>NUCLEOTIDE SEQUENCE [LARGE SCALE GENOMIC DNA]</scope>
    <source>
        <strain>ATCC 49882 / DSM 28221 / CCUG 30454 / Houston 1</strain>
    </source>
</reference>
<organism>
    <name type="scientific">Bartonella henselae (strain ATCC 49882 / DSM 28221 / CCUG 30454 / Houston 1)</name>
    <name type="common">Rochalimaea henselae</name>
    <dbReference type="NCBI Taxonomy" id="283166"/>
    <lineage>
        <taxon>Bacteria</taxon>
        <taxon>Pseudomonadati</taxon>
        <taxon>Pseudomonadota</taxon>
        <taxon>Alphaproteobacteria</taxon>
        <taxon>Hyphomicrobiales</taxon>
        <taxon>Bartonellaceae</taxon>
        <taxon>Bartonella</taxon>
    </lineage>
</organism>
<name>RL15_BARHE</name>
<accession>Q6G2Y4</accession>
<sequence>MKLNELSDCKGAIRNRKRVGRGIGSGTGKTGGRGVKGQRSRSGVSLNGFEGGQMPIYRRLPKRGFRNFFAKDYNEVSLGRIQSAIDTGKLNIEKPVDIIALKEAGIIRRVKDGVRLLSDGELKVKISFNVSYASKAARLKIEKAGGQVHFPETV</sequence>
<gene>
    <name evidence="1" type="primary">rplO</name>
    <name type="ordered locus">BH10320</name>
</gene>
<keyword id="KW-0687">Ribonucleoprotein</keyword>
<keyword id="KW-0689">Ribosomal protein</keyword>
<keyword id="KW-0694">RNA-binding</keyword>
<keyword id="KW-0699">rRNA-binding</keyword>
<feature type="chain" id="PRO_0000104679" description="Large ribosomal subunit protein uL15">
    <location>
        <begin position="1"/>
        <end position="154"/>
    </location>
</feature>
<feature type="region of interest" description="Disordered" evidence="2">
    <location>
        <begin position="17"/>
        <end position="44"/>
    </location>
</feature>
<feature type="compositionally biased region" description="Gly residues" evidence="2">
    <location>
        <begin position="21"/>
        <end position="35"/>
    </location>
</feature>